<reference key="1">
    <citation type="submission" date="2016-01" db="EMBL/GenBank/DDBJ databases">
        <title>Genome sequencing of Roseivirga ehrenbergii KMM 6017.</title>
        <authorList>
            <person name="Selvaratnam C."/>
            <person name="Thevarajoo S."/>
            <person name="Goh K.M."/>
            <person name="Ee R."/>
            <person name="Chan K.-G."/>
            <person name="Chong C.S."/>
        </authorList>
    </citation>
    <scope>NUCLEOTIDE SEQUENCE [LARGE SCALE GENOMIC DNA]</scope>
    <source>
        <strain>DSM 102268 / JCM 13514 / KCTC 12282 / NCIMB 14502 / KMM 6017</strain>
    </source>
</reference>
<reference key="2">
    <citation type="journal article" date="2020" name="Nature">
        <title>STING cyclic dinucleotide sensing originated in bacteria.</title>
        <authorList>
            <person name="Morehouse B.R."/>
            <person name="Govande A.A."/>
            <person name="Millman A."/>
            <person name="Keszei A.F.A."/>
            <person name="Lowey B."/>
            <person name="Ofir G."/>
            <person name="Shao S."/>
            <person name="Sorek R."/>
            <person name="Kranzusch P.J."/>
        </authorList>
    </citation>
    <scope>C-DI-GMP-BINDING</scope>
    <scope>NUCLEOTIDE-BINDING</scope>
    <scope>DOMAIN</scope>
</reference>
<reference key="3">
    <citation type="journal article" date="2020" name="Nat. Microbiol.">
        <title>Diversity and classification of cyclic-oligonucleotide-based anti-phage signalling systems.</title>
        <authorList>
            <person name="Millman A."/>
            <person name="Melamed S."/>
            <person name="Amitai G."/>
            <person name="Sorek R."/>
        </authorList>
    </citation>
    <scope>CLASSIFICATION AND NOMENCLATURE</scope>
</reference>
<comment type="function">
    <text evidence="3 6">Effector protein of a CBASS antivirus system (Probable) (PubMed:32877915). CBASS (cyclic oligonucleotide-based antiphage signaling system) provides immunity against bacteriophage. The CD-NTase protein synthesizes cyclic nucleotides in response to infection; these serve as specific second messenger signals. The signals activate a diverse range of effectors, leading to bacterial cell death and thus abortive phage infection. A type I-D CBASS(GG) system (PubMed:32839535).</text>
</comment>
<comment type="function">
    <text evidence="2 6">Binds c-di-GMP (synthesized by the cognate CdnE encoded upstream in the same operon) and about 10-fold less well 3'3'-cGAMP, but not c-di-AMP, 2'3'-cGAMP or cUMP-AMP (tested with a protein without the transmembrane region) (PubMed:32877915). The effector protein for this CBASS system, its activity is stimulated by c-di-GMP and leads to cell death (Probable).</text>
</comment>
<comment type="subcellular location">
    <subcellularLocation>
        <location evidence="5">Cell inner membrane</location>
        <topology evidence="1">Single-pass membrane protein</topology>
    </subcellularLocation>
</comment>
<comment type="domain">
    <text evidence="6">The cyclic nucleotide binds in the C-terminal bacterial STING region.</text>
</comment>
<comment type="similarity">
    <text evidence="5">In the C-terminal section; belongs to the bacterial STING family.</text>
</comment>
<comment type="sequence caution" evidence="5">
    <conflict type="erroneous initiation">
        <sequence resource="EMBL-CDS" id="KYG81645"/>
    </conflict>
    <text>Truncated N-terminus.</text>
</comment>
<keyword id="KW-0051">Antiviral defense</keyword>
<keyword id="KW-0997">Cell inner membrane</keyword>
<keyword id="KW-1003">Cell membrane</keyword>
<keyword id="KW-0472">Membrane</keyword>
<keyword id="KW-0547">Nucleotide-binding</keyword>
<keyword id="KW-0812">Transmembrane</keyword>
<keyword id="KW-1133">Transmembrane helix</keyword>
<evidence type="ECO:0000255" key="1"/>
<evidence type="ECO:0000269" key="2">
    <source>
    </source>
</evidence>
<evidence type="ECO:0000303" key="3">
    <source>
    </source>
</evidence>
<evidence type="ECO:0000303" key="4">
    <source>
    </source>
</evidence>
<evidence type="ECO:0000305" key="5"/>
<evidence type="ECO:0000305" key="6">
    <source>
    </source>
</evidence>
<organism>
    <name type="scientific">Roseivirga ehrenbergii (strain DSM 102268 / JCM 13514 / KCTC 12282 / NCIMB 14502 / KMM 6017)</name>
    <dbReference type="NCBI Taxonomy" id="279360"/>
    <lineage>
        <taxon>Bacteria</taxon>
        <taxon>Pseudomonadati</taxon>
        <taxon>Bacteroidota</taxon>
        <taxon>Cytophagia</taxon>
        <taxon>Cytophagales</taxon>
        <taxon>Roseivirgaceae</taxon>
        <taxon>Roseivirga</taxon>
    </lineage>
</organism>
<name>CAP13_ROSEK</name>
<proteinExistence type="evidence at protein level"/>
<dbReference type="EMBL" id="LQZQ01000002">
    <property type="protein sequence ID" value="KYG81645.1"/>
    <property type="status" value="ALT_INIT"/>
    <property type="molecule type" value="Genomic_DNA"/>
</dbReference>
<dbReference type="SMR" id="A0A150XSR0"/>
<dbReference type="STRING" id="279360.MB14_13770"/>
<dbReference type="Proteomes" id="UP000075583">
    <property type="component" value="Unassembled WGS sequence"/>
</dbReference>
<dbReference type="GO" id="GO:0005886">
    <property type="term" value="C:plasma membrane"/>
    <property type="evidence" value="ECO:0007669"/>
    <property type="project" value="UniProtKB-SubCell"/>
</dbReference>
<dbReference type="GO" id="GO:0000166">
    <property type="term" value="F:nucleotide binding"/>
    <property type="evidence" value="ECO:0007669"/>
    <property type="project" value="UniProtKB-KW"/>
</dbReference>
<dbReference type="GO" id="GO:0051607">
    <property type="term" value="P:defense response to virus"/>
    <property type="evidence" value="ECO:0007669"/>
    <property type="project" value="UniProtKB-KW"/>
</dbReference>
<dbReference type="CDD" id="cd22659">
    <property type="entry name" value="STING_bact-like"/>
    <property type="match status" value="1"/>
</dbReference>
<dbReference type="InterPro" id="IPR046876">
    <property type="entry name" value="Prok_STING"/>
</dbReference>
<dbReference type="Pfam" id="PF20300">
    <property type="entry name" value="prok_STING"/>
    <property type="match status" value="1"/>
</dbReference>
<sequence>MKYGLLQENGKVAEFIQIKTIMKNVIANVSTAITLALMILWIKYPNRIEWEAIIGILLVIKEVTIRWQIGKIESLEFSPAISLAHGYVNNFLEPAINELLMKASNNINFSIYIPHDLEELSDQQIDRMKLQIEANGYRLKEIKLKKKTGRPHDLLLVEKQEGTLSYFDFPRTLLSLQSYIDYKVDSTKNEFSEEKKIAMGAKLVDAFHNEVDRLIKKKNLEGIVTFVSKDLELY</sequence>
<feature type="chain" id="PRO_0000451883" description="CD-NTase-associated protein 13">
    <location>
        <begin position="1"/>
        <end position="234"/>
    </location>
</feature>
<feature type="transmembrane region" description="Helical" evidence="1">
    <location>
        <begin position="20"/>
        <end position="42"/>
    </location>
</feature>
<gene>
    <name evidence="5" type="primary">cap13</name>
    <name type="ORF">MB14_13770</name>
</gene>
<accession>A0A150XSR0</accession>
<protein>
    <recommendedName>
        <fullName evidence="5">CD-NTase-associated protein 13</fullName>
        <shortName evidence="5">Cap13</shortName>
    </recommendedName>
    <alternativeName>
        <fullName evidence="4">TM-STING</fullName>
        <shortName evidence="4">ReSTING</shortName>
    </alternativeName>
</protein>